<name>MURG_SYNR3</name>
<comment type="function">
    <text evidence="1">Cell wall formation. Catalyzes the transfer of a GlcNAc subunit on undecaprenyl-pyrophosphoryl-MurNAc-pentapeptide (lipid intermediate I) to form undecaprenyl-pyrophosphoryl-MurNAc-(pentapeptide)GlcNAc (lipid intermediate II).</text>
</comment>
<comment type="catalytic activity">
    <reaction evidence="1">
        <text>di-trans,octa-cis-undecaprenyl diphospho-N-acetyl-alpha-D-muramoyl-L-alanyl-D-glutamyl-meso-2,6-diaminopimeloyl-D-alanyl-D-alanine + UDP-N-acetyl-alpha-D-glucosamine = di-trans,octa-cis-undecaprenyl diphospho-[N-acetyl-alpha-D-glucosaminyl-(1-&gt;4)]-N-acetyl-alpha-D-muramoyl-L-alanyl-D-glutamyl-meso-2,6-diaminopimeloyl-D-alanyl-D-alanine + UDP + H(+)</text>
        <dbReference type="Rhea" id="RHEA:31227"/>
        <dbReference type="ChEBI" id="CHEBI:15378"/>
        <dbReference type="ChEBI" id="CHEBI:57705"/>
        <dbReference type="ChEBI" id="CHEBI:58223"/>
        <dbReference type="ChEBI" id="CHEBI:61387"/>
        <dbReference type="ChEBI" id="CHEBI:61388"/>
        <dbReference type="EC" id="2.4.1.227"/>
    </reaction>
</comment>
<comment type="pathway">
    <text evidence="1">Cell wall biogenesis; peptidoglycan biosynthesis.</text>
</comment>
<comment type="subcellular location">
    <subcellularLocation>
        <location evidence="1">Cell inner membrane</location>
        <topology evidence="1">Peripheral membrane protein</topology>
        <orientation evidence="1">Cytoplasmic side</orientation>
    </subcellularLocation>
</comment>
<comment type="similarity">
    <text evidence="1">Belongs to the glycosyltransferase 28 family. MurG subfamily.</text>
</comment>
<keyword id="KW-0131">Cell cycle</keyword>
<keyword id="KW-0132">Cell division</keyword>
<keyword id="KW-0997">Cell inner membrane</keyword>
<keyword id="KW-1003">Cell membrane</keyword>
<keyword id="KW-0133">Cell shape</keyword>
<keyword id="KW-0961">Cell wall biogenesis/degradation</keyword>
<keyword id="KW-0328">Glycosyltransferase</keyword>
<keyword id="KW-0472">Membrane</keyword>
<keyword id="KW-0573">Peptidoglycan synthesis</keyword>
<keyword id="KW-1185">Reference proteome</keyword>
<keyword id="KW-0808">Transferase</keyword>
<accession>A5GW69</accession>
<protein>
    <recommendedName>
        <fullName evidence="1">UDP-N-acetylglucosamine--N-acetylmuramyl-(pentapeptide) pyrophosphoryl-undecaprenol N-acetylglucosamine transferase</fullName>
        <ecNumber evidence="1">2.4.1.227</ecNumber>
    </recommendedName>
    <alternativeName>
        <fullName evidence="1">Undecaprenyl-PP-MurNAc-pentapeptide-UDPGlcNAc GlcNAc transferase</fullName>
    </alternativeName>
</protein>
<organism>
    <name type="scientific">Synechococcus sp. (strain RCC307)</name>
    <dbReference type="NCBI Taxonomy" id="316278"/>
    <lineage>
        <taxon>Bacteria</taxon>
        <taxon>Bacillati</taxon>
        <taxon>Cyanobacteriota</taxon>
        <taxon>Cyanophyceae</taxon>
        <taxon>Synechococcales</taxon>
        <taxon>Synechococcaceae</taxon>
        <taxon>Synechococcus</taxon>
    </lineage>
</organism>
<dbReference type="EC" id="2.4.1.227" evidence="1"/>
<dbReference type="EMBL" id="CT978603">
    <property type="protein sequence ID" value="CAK29128.1"/>
    <property type="molecule type" value="Genomic_DNA"/>
</dbReference>
<dbReference type="SMR" id="A5GW69"/>
<dbReference type="STRING" id="316278.SynRCC307_2225"/>
<dbReference type="CAZy" id="GT28">
    <property type="family name" value="Glycosyltransferase Family 28"/>
</dbReference>
<dbReference type="KEGG" id="syr:SynRCC307_2225"/>
<dbReference type="eggNOG" id="COG0707">
    <property type="taxonomic scope" value="Bacteria"/>
</dbReference>
<dbReference type="HOGENOM" id="CLU_037404_0_1_3"/>
<dbReference type="OrthoDB" id="9808936at2"/>
<dbReference type="UniPathway" id="UPA00219"/>
<dbReference type="Proteomes" id="UP000001115">
    <property type="component" value="Chromosome"/>
</dbReference>
<dbReference type="GO" id="GO:0005886">
    <property type="term" value="C:plasma membrane"/>
    <property type="evidence" value="ECO:0007669"/>
    <property type="project" value="UniProtKB-SubCell"/>
</dbReference>
<dbReference type="GO" id="GO:0051991">
    <property type="term" value="F:UDP-N-acetyl-D-glucosamine:N-acetylmuramoyl-L-alanyl-D-glutamyl-meso-2,6-diaminopimelyl-D-alanyl-D-alanine-diphosphoundecaprenol 4-beta-N-acetylglucosaminlytransferase activity"/>
    <property type="evidence" value="ECO:0007669"/>
    <property type="project" value="RHEA"/>
</dbReference>
<dbReference type="GO" id="GO:0050511">
    <property type="term" value="F:undecaprenyldiphospho-muramoylpentapeptide beta-N-acetylglucosaminyltransferase activity"/>
    <property type="evidence" value="ECO:0007669"/>
    <property type="project" value="UniProtKB-UniRule"/>
</dbReference>
<dbReference type="GO" id="GO:0005975">
    <property type="term" value="P:carbohydrate metabolic process"/>
    <property type="evidence" value="ECO:0007669"/>
    <property type="project" value="InterPro"/>
</dbReference>
<dbReference type="GO" id="GO:0051301">
    <property type="term" value="P:cell division"/>
    <property type="evidence" value="ECO:0007669"/>
    <property type="project" value="UniProtKB-KW"/>
</dbReference>
<dbReference type="GO" id="GO:0071555">
    <property type="term" value="P:cell wall organization"/>
    <property type="evidence" value="ECO:0007669"/>
    <property type="project" value="UniProtKB-KW"/>
</dbReference>
<dbReference type="GO" id="GO:0030259">
    <property type="term" value="P:lipid glycosylation"/>
    <property type="evidence" value="ECO:0007669"/>
    <property type="project" value="UniProtKB-UniRule"/>
</dbReference>
<dbReference type="GO" id="GO:0009252">
    <property type="term" value="P:peptidoglycan biosynthetic process"/>
    <property type="evidence" value="ECO:0007669"/>
    <property type="project" value="UniProtKB-UniRule"/>
</dbReference>
<dbReference type="GO" id="GO:0008360">
    <property type="term" value="P:regulation of cell shape"/>
    <property type="evidence" value="ECO:0007669"/>
    <property type="project" value="UniProtKB-KW"/>
</dbReference>
<dbReference type="CDD" id="cd03785">
    <property type="entry name" value="GT28_MurG"/>
    <property type="match status" value="1"/>
</dbReference>
<dbReference type="Gene3D" id="3.40.50.2000">
    <property type="entry name" value="Glycogen Phosphorylase B"/>
    <property type="match status" value="2"/>
</dbReference>
<dbReference type="HAMAP" id="MF_00033">
    <property type="entry name" value="MurG"/>
    <property type="match status" value="1"/>
</dbReference>
<dbReference type="InterPro" id="IPR006009">
    <property type="entry name" value="GlcNAc_MurG"/>
</dbReference>
<dbReference type="InterPro" id="IPR007235">
    <property type="entry name" value="Glyco_trans_28_C"/>
</dbReference>
<dbReference type="InterPro" id="IPR004276">
    <property type="entry name" value="GlycoTrans_28_N"/>
</dbReference>
<dbReference type="PANTHER" id="PTHR21015:SF22">
    <property type="entry name" value="GLYCOSYLTRANSFERASE"/>
    <property type="match status" value="1"/>
</dbReference>
<dbReference type="PANTHER" id="PTHR21015">
    <property type="entry name" value="UDP-N-ACETYLGLUCOSAMINE--N-ACETYLMURAMYL-(PENTAPEPTIDE) PYROPHOSPHORYL-UNDECAPRENOL N-ACETYLGLUCOSAMINE TRANSFERASE 1"/>
    <property type="match status" value="1"/>
</dbReference>
<dbReference type="Pfam" id="PF04101">
    <property type="entry name" value="Glyco_tran_28_C"/>
    <property type="match status" value="1"/>
</dbReference>
<dbReference type="Pfam" id="PF03033">
    <property type="entry name" value="Glyco_transf_28"/>
    <property type="match status" value="1"/>
</dbReference>
<dbReference type="SUPFAM" id="SSF53756">
    <property type="entry name" value="UDP-Glycosyltransferase/glycogen phosphorylase"/>
    <property type="match status" value="1"/>
</dbReference>
<evidence type="ECO:0000255" key="1">
    <source>
        <dbReference type="HAMAP-Rule" id="MF_00033"/>
    </source>
</evidence>
<gene>
    <name evidence="1" type="primary">murG</name>
    <name type="ordered locus">SynRCC307_2225</name>
</gene>
<proteinExistence type="inferred from homology"/>
<feature type="chain" id="PRO_0000315191" description="UDP-N-acetylglucosamine--N-acetylmuramyl-(pentapeptide) pyrophosphoryl-undecaprenol N-acetylglucosamine transferase">
    <location>
        <begin position="1"/>
        <end position="360"/>
    </location>
</feature>
<feature type="binding site" evidence="1">
    <location>
        <begin position="11"/>
        <end position="13"/>
    </location>
    <ligand>
        <name>UDP-N-acetyl-alpha-D-glucosamine</name>
        <dbReference type="ChEBI" id="CHEBI:57705"/>
    </ligand>
</feature>
<feature type="binding site" evidence="1">
    <location>
        <position position="120"/>
    </location>
    <ligand>
        <name>UDP-N-acetyl-alpha-D-glucosamine</name>
        <dbReference type="ChEBI" id="CHEBI:57705"/>
    </ligand>
</feature>
<feature type="binding site" evidence="1">
    <location>
        <position position="161"/>
    </location>
    <ligand>
        <name>UDP-N-acetyl-alpha-D-glucosamine</name>
        <dbReference type="ChEBI" id="CHEBI:57705"/>
    </ligand>
</feature>
<feature type="binding site" evidence="1">
    <location>
        <position position="188"/>
    </location>
    <ligand>
        <name>UDP-N-acetyl-alpha-D-glucosamine</name>
        <dbReference type="ChEBI" id="CHEBI:57705"/>
    </ligand>
</feature>
<feature type="binding site" evidence="1">
    <location>
        <position position="282"/>
    </location>
    <ligand>
        <name>UDP-N-acetyl-alpha-D-glucosamine</name>
        <dbReference type="ChEBI" id="CHEBI:57705"/>
    </ligand>
</feature>
<reference key="1">
    <citation type="submission" date="2006-05" db="EMBL/GenBank/DDBJ databases">
        <authorList>
            <consortium name="Genoscope"/>
        </authorList>
    </citation>
    <scope>NUCLEOTIDE SEQUENCE [LARGE SCALE GENOMIC DNA]</scope>
    <source>
        <strain>RCC307</strain>
    </source>
</reference>
<sequence>MPRLLIAASGTGGHLFPALAVADRMPETWSVRWLGVPDRLERQLVPSRYPLFTVRAGGLQGRGLRKLKQLIQLLWSAWPVTRLIRKQECAVVFTTGGYIAAPAILAARLCRRPVVLHESNAIPGQVTRLFGRFCSRVALGLPQAADYLSGCRPEVTGTPVREDFLKPAACPDWVPAGDGPLLLVIGGSQGAVGLNRMVRAAAPALLAMGCRIVHLSGHVDPDQGQLEHPAYSERPFSEEIPALLQHADLAISRAGAGSLSELAVCGTPAVLVPFPQAADDHQSANAAAAAAVGAAVIVAQHGPNEPGLRRMLWNLLGPRLRGCDPAADPLRLLRQGMERLAVRDADRLLSQLLQDLAAEA</sequence>